<organism>
    <name type="scientific">Shewanella sediminis (strain HAW-EB3)</name>
    <dbReference type="NCBI Taxonomy" id="425104"/>
    <lineage>
        <taxon>Bacteria</taxon>
        <taxon>Pseudomonadati</taxon>
        <taxon>Pseudomonadota</taxon>
        <taxon>Gammaproteobacteria</taxon>
        <taxon>Alteromonadales</taxon>
        <taxon>Shewanellaceae</taxon>
        <taxon>Shewanella</taxon>
    </lineage>
</organism>
<proteinExistence type="inferred from homology"/>
<evidence type="ECO:0000255" key="1">
    <source>
        <dbReference type="HAMAP-Rule" id="MF_00736"/>
    </source>
</evidence>
<evidence type="ECO:0000305" key="2"/>
<protein>
    <recommendedName>
        <fullName evidence="1">Large ribosomal subunit protein uL11</fullName>
    </recommendedName>
    <alternativeName>
        <fullName evidence="2">50S ribosomal protein L11</fullName>
    </alternativeName>
</protein>
<comment type="function">
    <text evidence="1">Forms part of the ribosomal stalk which helps the ribosome interact with GTP-bound translation factors.</text>
</comment>
<comment type="subunit">
    <text evidence="1">Part of the ribosomal stalk of the 50S ribosomal subunit. Interacts with L10 and the large rRNA to form the base of the stalk. L10 forms an elongated spine to which L12 dimers bind in a sequential fashion forming a multimeric L10(L12)X complex.</text>
</comment>
<comment type="PTM">
    <text evidence="1">One or more lysine residues are methylated.</text>
</comment>
<comment type="similarity">
    <text evidence="1">Belongs to the universal ribosomal protein uL11 family.</text>
</comment>
<reference key="1">
    <citation type="submission" date="2007-08" db="EMBL/GenBank/DDBJ databases">
        <title>Complete sequence of Shewanella sediminis HAW-EB3.</title>
        <authorList>
            <consortium name="US DOE Joint Genome Institute"/>
            <person name="Copeland A."/>
            <person name="Lucas S."/>
            <person name="Lapidus A."/>
            <person name="Barry K."/>
            <person name="Glavina del Rio T."/>
            <person name="Dalin E."/>
            <person name="Tice H."/>
            <person name="Pitluck S."/>
            <person name="Chertkov O."/>
            <person name="Brettin T."/>
            <person name="Bruce D."/>
            <person name="Detter J.C."/>
            <person name="Han C."/>
            <person name="Schmutz J."/>
            <person name="Larimer F."/>
            <person name="Land M."/>
            <person name="Hauser L."/>
            <person name="Kyrpides N."/>
            <person name="Kim E."/>
            <person name="Zhao J.-S."/>
            <person name="Richardson P."/>
        </authorList>
    </citation>
    <scope>NUCLEOTIDE SEQUENCE [LARGE SCALE GENOMIC DNA]</scope>
    <source>
        <strain>HAW-EB3</strain>
    </source>
</reference>
<name>RL11_SHESH</name>
<accession>A8G1F9</accession>
<dbReference type="EMBL" id="CP000821">
    <property type="protein sequence ID" value="ABV38932.1"/>
    <property type="molecule type" value="Genomic_DNA"/>
</dbReference>
<dbReference type="RefSeq" id="WP_012144659.1">
    <property type="nucleotide sequence ID" value="NC_009831.1"/>
</dbReference>
<dbReference type="SMR" id="A8G1F9"/>
<dbReference type="STRING" id="425104.Ssed_4328"/>
<dbReference type="KEGG" id="sse:Ssed_4328"/>
<dbReference type="eggNOG" id="COG0080">
    <property type="taxonomic scope" value="Bacteria"/>
</dbReference>
<dbReference type="HOGENOM" id="CLU_074237_2_0_6"/>
<dbReference type="OrthoDB" id="9802408at2"/>
<dbReference type="Proteomes" id="UP000002015">
    <property type="component" value="Chromosome"/>
</dbReference>
<dbReference type="GO" id="GO:0022625">
    <property type="term" value="C:cytosolic large ribosomal subunit"/>
    <property type="evidence" value="ECO:0007669"/>
    <property type="project" value="TreeGrafter"/>
</dbReference>
<dbReference type="GO" id="GO:0070180">
    <property type="term" value="F:large ribosomal subunit rRNA binding"/>
    <property type="evidence" value="ECO:0007669"/>
    <property type="project" value="UniProtKB-UniRule"/>
</dbReference>
<dbReference type="GO" id="GO:0003735">
    <property type="term" value="F:structural constituent of ribosome"/>
    <property type="evidence" value="ECO:0007669"/>
    <property type="project" value="InterPro"/>
</dbReference>
<dbReference type="GO" id="GO:0006412">
    <property type="term" value="P:translation"/>
    <property type="evidence" value="ECO:0007669"/>
    <property type="project" value="UniProtKB-UniRule"/>
</dbReference>
<dbReference type="CDD" id="cd00349">
    <property type="entry name" value="Ribosomal_L11"/>
    <property type="match status" value="1"/>
</dbReference>
<dbReference type="FunFam" id="1.10.10.250:FF:000001">
    <property type="entry name" value="50S ribosomal protein L11"/>
    <property type="match status" value="1"/>
</dbReference>
<dbReference type="FunFam" id="3.30.1550.10:FF:000001">
    <property type="entry name" value="50S ribosomal protein L11"/>
    <property type="match status" value="1"/>
</dbReference>
<dbReference type="Gene3D" id="1.10.10.250">
    <property type="entry name" value="Ribosomal protein L11, C-terminal domain"/>
    <property type="match status" value="1"/>
</dbReference>
<dbReference type="Gene3D" id="3.30.1550.10">
    <property type="entry name" value="Ribosomal protein L11/L12, N-terminal domain"/>
    <property type="match status" value="1"/>
</dbReference>
<dbReference type="HAMAP" id="MF_00736">
    <property type="entry name" value="Ribosomal_uL11"/>
    <property type="match status" value="1"/>
</dbReference>
<dbReference type="InterPro" id="IPR000911">
    <property type="entry name" value="Ribosomal_uL11"/>
</dbReference>
<dbReference type="InterPro" id="IPR006519">
    <property type="entry name" value="Ribosomal_uL11_bac-typ"/>
</dbReference>
<dbReference type="InterPro" id="IPR020783">
    <property type="entry name" value="Ribosomal_uL11_C"/>
</dbReference>
<dbReference type="InterPro" id="IPR036769">
    <property type="entry name" value="Ribosomal_uL11_C_sf"/>
</dbReference>
<dbReference type="InterPro" id="IPR020785">
    <property type="entry name" value="Ribosomal_uL11_CS"/>
</dbReference>
<dbReference type="InterPro" id="IPR020784">
    <property type="entry name" value="Ribosomal_uL11_N"/>
</dbReference>
<dbReference type="InterPro" id="IPR036796">
    <property type="entry name" value="Ribosomal_uL11_N_sf"/>
</dbReference>
<dbReference type="NCBIfam" id="TIGR01632">
    <property type="entry name" value="L11_bact"/>
    <property type="match status" value="1"/>
</dbReference>
<dbReference type="PANTHER" id="PTHR11661">
    <property type="entry name" value="60S RIBOSOMAL PROTEIN L12"/>
    <property type="match status" value="1"/>
</dbReference>
<dbReference type="PANTHER" id="PTHR11661:SF1">
    <property type="entry name" value="LARGE RIBOSOMAL SUBUNIT PROTEIN UL11M"/>
    <property type="match status" value="1"/>
</dbReference>
<dbReference type="Pfam" id="PF00298">
    <property type="entry name" value="Ribosomal_L11"/>
    <property type="match status" value="1"/>
</dbReference>
<dbReference type="Pfam" id="PF03946">
    <property type="entry name" value="Ribosomal_L11_N"/>
    <property type="match status" value="1"/>
</dbReference>
<dbReference type="SMART" id="SM00649">
    <property type="entry name" value="RL11"/>
    <property type="match status" value="1"/>
</dbReference>
<dbReference type="SUPFAM" id="SSF54747">
    <property type="entry name" value="Ribosomal L11/L12e N-terminal domain"/>
    <property type="match status" value="1"/>
</dbReference>
<dbReference type="SUPFAM" id="SSF46906">
    <property type="entry name" value="Ribosomal protein L11, C-terminal domain"/>
    <property type="match status" value="1"/>
</dbReference>
<dbReference type="PROSITE" id="PS00359">
    <property type="entry name" value="RIBOSOMAL_L11"/>
    <property type="match status" value="1"/>
</dbReference>
<keyword id="KW-0488">Methylation</keyword>
<keyword id="KW-1185">Reference proteome</keyword>
<keyword id="KW-0687">Ribonucleoprotein</keyword>
<keyword id="KW-0689">Ribosomal protein</keyword>
<keyword id="KW-0694">RNA-binding</keyword>
<keyword id="KW-0699">rRNA-binding</keyword>
<feature type="chain" id="PRO_1000083406" description="Large ribosomal subunit protein uL11">
    <location>
        <begin position="1"/>
        <end position="142"/>
    </location>
</feature>
<gene>
    <name evidence="1" type="primary">rplK</name>
    <name type="ordered locus">Ssed_4328</name>
</gene>
<sequence>MAKKVDGYIKLQVAAGAANPSPPVGPALGQKGVNIMEFCKAFNARTEKFEKGMPIPVVITVYTDRSFTFETKTPPASFLLLKAAGLKSGSGRPNTEKVGTIKRSAVQEIAETKATDMTGADIEAMTRSIEGTARSMGLVVED</sequence>